<sequence length="838" mass="97170">MATEIITEKKEIVARTRSSGITFNPPVTHDMVRSLFDPTIKKSFLECCITLTILANFVLCYYLINWFGLSQAKLIFLIQYVYWRLAYNLGIGIILHYQSHYESLTKYANQNKLFKKESAKTNWIASFFQFEIKSKMPNDYNLHSYPDELNCWLLFRQFVDLILMQDFTTYIIYVYLSLPTDVSSLINWKSLIGIAMILFNIWVKIDAHRVVKDYAWYWGDFFFLQDAELTFDGVFNISPHPMYSIGYLGYYGLSLICGDYRVLLVSVGGHFLQFLFLKYVESPHIERTYGSDSPSNSTQHQIDDLIAKENYDYSRPLINTGILFENFQFLRFSDYFTVSTILVLFSWFFTSKPSNNFLFVLTLLTKLTTWLLTSWILFQQSNRKWFTRLFLKNGYTQIYSYQQWQFLYNYSLIVTNTLLFLHTLSELYSIQSSDGLNNSHVIFGLLLCAIQIWCNVETRDAISDFGWFYGDFFLTNYITTRKLTSQGIYRYLNNPEAILGVAGIWGSVLMTNFSKTNVTLAVLWTVTNLIFVKLIEEPHVSKVYGNGTRVSGVQQTLLALKPFRWISDLIDDWGNKMMKSLHGFDSDSDSESISSGKKGNLSSLKLSKKSKLKNRVQSDNKLAPNSKFEIEDLEDEIVYLPNSVTISWKLPISMFNEKDWIGLYNVLETGSDRTQTKIPSLGHWSAVDATGYPHDSINTNSITEFKKGSKNVSGRVTFDANLLYFKPGIYEFRYHSKNSHKVLLISSPFQISFPEFDNEAQVDIKNEIMKFLDAISCMKNEKYFANDNKYFTADAFSNYIKDSFGIELSTDYIRRVNGDVEVISRRVHDIKEVLDSLN</sequence>
<accession>A7TNI7</accession>
<reference key="1">
    <citation type="journal article" date="2007" name="Proc. Natl. Acad. Sci. U.S.A.">
        <title>Independent sorting-out of thousands of duplicated gene pairs in two yeast species descended from a whole-genome duplication.</title>
        <authorList>
            <person name="Scannell D.R."/>
            <person name="Frank A.C."/>
            <person name="Conant G.C."/>
            <person name="Byrne K.P."/>
            <person name="Woolfit M."/>
            <person name="Wolfe K.H."/>
        </authorList>
    </citation>
    <scope>NUCLEOTIDE SEQUENCE [LARGE SCALE GENOMIC DNA]</scope>
    <source>
        <strain>ATCC 22028 / DSM 70294 / BCRC 21397 / CBS 2163 / NBRC 10782 / NRRL Y-8283 / UCD 57-17</strain>
    </source>
</reference>
<proteinExistence type="inferred from homology"/>
<evidence type="ECO:0000255" key="1">
    <source>
        <dbReference type="HAMAP-Rule" id="MF_03217"/>
    </source>
</evidence>
<gene>
    <name type="primary">CHO2-1</name>
    <name type="ORF">Kpol_1026p17</name>
</gene>
<protein>
    <recommendedName>
        <fullName evidence="1">Phosphatidylethanolamine N-methyltransferase 1</fullName>
        <shortName evidence="1">PE methyltransferase 1</shortName>
        <shortName evidence="1">PEAMT 1</shortName>
        <shortName evidence="1">PEMT 1</shortName>
        <ecNumber evidence="1">2.1.1.17</ecNumber>
    </recommendedName>
</protein>
<dbReference type="EC" id="2.1.1.17" evidence="1"/>
<dbReference type="EMBL" id="DS480431">
    <property type="protein sequence ID" value="EDO16170.1"/>
    <property type="molecule type" value="Genomic_DNA"/>
</dbReference>
<dbReference type="RefSeq" id="XP_001644028.1">
    <property type="nucleotide sequence ID" value="XM_001643978.1"/>
</dbReference>
<dbReference type="FunCoup" id="A7TNI7">
    <property type="interactions" value="96"/>
</dbReference>
<dbReference type="STRING" id="436907.A7TNI7"/>
<dbReference type="GeneID" id="5544308"/>
<dbReference type="KEGG" id="vpo:Kpol_1026p17"/>
<dbReference type="eggNOG" id="ENOG502QRGH">
    <property type="taxonomic scope" value="Eukaryota"/>
</dbReference>
<dbReference type="HOGENOM" id="CLU_005987_0_1_1"/>
<dbReference type="InParanoid" id="A7TNI7"/>
<dbReference type="OMA" id="PPVTHDM"/>
<dbReference type="OrthoDB" id="4583at2759"/>
<dbReference type="PhylomeDB" id="A7TNI7"/>
<dbReference type="UniPathway" id="UPA00753"/>
<dbReference type="Proteomes" id="UP000000267">
    <property type="component" value="Unassembled WGS sequence"/>
</dbReference>
<dbReference type="GO" id="GO:0005789">
    <property type="term" value="C:endoplasmic reticulum membrane"/>
    <property type="evidence" value="ECO:0007669"/>
    <property type="project" value="UniProtKB-SubCell"/>
</dbReference>
<dbReference type="GO" id="GO:0004608">
    <property type="term" value="F:phosphatidylethanolamine N-methyltransferase activity"/>
    <property type="evidence" value="ECO:0007669"/>
    <property type="project" value="UniProtKB-UniRule"/>
</dbReference>
<dbReference type="GO" id="GO:0032259">
    <property type="term" value="P:methylation"/>
    <property type="evidence" value="ECO:0007669"/>
    <property type="project" value="UniProtKB-KW"/>
</dbReference>
<dbReference type="GO" id="GO:0006656">
    <property type="term" value="P:phosphatidylcholine biosynthetic process"/>
    <property type="evidence" value="ECO:0007669"/>
    <property type="project" value="UniProtKB-UniRule"/>
</dbReference>
<dbReference type="FunFam" id="1.20.120.1630:FF:000016">
    <property type="entry name" value="Phosphatidylethanolamine N-methyltransferase"/>
    <property type="match status" value="1"/>
</dbReference>
<dbReference type="Gene3D" id="1.20.120.1630">
    <property type="match status" value="1"/>
</dbReference>
<dbReference type="Gene3D" id="2.60.40.2840">
    <property type="match status" value="1"/>
</dbReference>
<dbReference type="HAMAP" id="MF_03217">
    <property type="entry name" value="PEMT"/>
    <property type="match status" value="1"/>
</dbReference>
<dbReference type="InterPro" id="IPR007318">
    <property type="entry name" value="Phopholipid_MeTrfase"/>
</dbReference>
<dbReference type="InterPro" id="IPR016219">
    <property type="entry name" value="Phosphatid-EA_MeTrfase_fun"/>
</dbReference>
<dbReference type="PANTHER" id="PTHR32138">
    <property type="entry name" value="PHOSPHATIDYLETHANOLAMINE N-METHYLTRANSFERASE"/>
    <property type="match status" value="1"/>
</dbReference>
<dbReference type="PANTHER" id="PTHR32138:SF0">
    <property type="entry name" value="PHOSPHATIDYLETHANOLAMINE N-METHYLTRANSFERASE"/>
    <property type="match status" value="1"/>
</dbReference>
<dbReference type="Pfam" id="PF04191">
    <property type="entry name" value="PEMT"/>
    <property type="match status" value="2"/>
</dbReference>
<dbReference type="PIRSF" id="PIRSF000383">
    <property type="entry name" value="PEAMT"/>
    <property type="match status" value="1"/>
</dbReference>
<dbReference type="PROSITE" id="PS51598">
    <property type="entry name" value="SAM_CHO2"/>
    <property type="match status" value="1"/>
</dbReference>
<name>CHO21_VANPO</name>
<organism>
    <name type="scientific">Vanderwaltozyma polyspora (strain ATCC 22028 / DSM 70294 / BCRC 21397 / CBS 2163 / NBRC 10782 / NRRL Y-8283 / UCD 57-17)</name>
    <name type="common">Kluyveromyces polysporus</name>
    <dbReference type="NCBI Taxonomy" id="436907"/>
    <lineage>
        <taxon>Eukaryota</taxon>
        <taxon>Fungi</taxon>
        <taxon>Dikarya</taxon>
        <taxon>Ascomycota</taxon>
        <taxon>Saccharomycotina</taxon>
        <taxon>Saccharomycetes</taxon>
        <taxon>Saccharomycetales</taxon>
        <taxon>Saccharomycetaceae</taxon>
        <taxon>Vanderwaltozyma</taxon>
    </lineage>
</organism>
<comment type="function">
    <text evidence="1">Catalyzes the first step of the methylation pathway of phosphatidylcholine biosynthesis, the SAM-dependent methylation of phosphatidylethanolamine (PE) to phosphatidylmonomethylethanolamine (PMME).</text>
</comment>
<comment type="catalytic activity">
    <reaction evidence="1">
        <text>a 1,2-diacyl-sn-glycero-3-phosphoethanolamine + S-adenosyl-L-methionine = a 1,2-diacyl-sn-glycero-3-phospho-N-methylethanolamine + S-adenosyl-L-homocysteine + H(+)</text>
        <dbReference type="Rhea" id="RHEA:11164"/>
        <dbReference type="ChEBI" id="CHEBI:15378"/>
        <dbReference type="ChEBI" id="CHEBI:57856"/>
        <dbReference type="ChEBI" id="CHEBI:59789"/>
        <dbReference type="ChEBI" id="CHEBI:64573"/>
        <dbReference type="ChEBI" id="CHEBI:64612"/>
        <dbReference type="EC" id="2.1.1.17"/>
    </reaction>
</comment>
<comment type="pathway">
    <text evidence="1">Phospholipid metabolism; phosphatidylcholine biosynthesis.</text>
</comment>
<comment type="subcellular location">
    <subcellularLocation>
        <location evidence="1">Endoplasmic reticulum membrane</location>
        <topology evidence="1">Multi-pass membrane protein</topology>
    </subcellularLocation>
</comment>
<comment type="similarity">
    <text evidence="1">Belongs to the class VI-like SAM-binding methyltransferase superfamily. CHO2 family.</text>
</comment>
<feature type="chain" id="PRO_0000405922" description="Phosphatidylethanolamine N-methyltransferase 1">
    <location>
        <begin position="1"/>
        <end position="838"/>
    </location>
</feature>
<feature type="topological domain" description="Lumenal" evidence="1">
    <location>
        <begin position="1"/>
        <end position="48"/>
    </location>
</feature>
<feature type="transmembrane region" description="Helical" evidence="1">
    <location>
        <begin position="49"/>
        <end position="69"/>
    </location>
</feature>
<feature type="topological domain" description="Cytoplasmic" evidence="1">
    <location>
        <begin position="70"/>
        <end position="73"/>
    </location>
</feature>
<feature type="transmembrane region" description="Helical" evidence="1">
    <location>
        <begin position="74"/>
        <end position="94"/>
    </location>
</feature>
<feature type="topological domain" description="Lumenal" evidence="1">
    <location>
        <begin position="95"/>
        <end position="157"/>
    </location>
</feature>
<feature type="transmembrane region" description="Helical" evidence="1">
    <location>
        <begin position="158"/>
        <end position="178"/>
    </location>
</feature>
<feature type="topological domain" description="Cytoplasmic" evidence="1">
    <location>
        <begin position="179"/>
        <end position="184"/>
    </location>
</feature>
<feature type="transmembrane region" description="Helical" evidence="1">
    <location>
        <begin position="185"/>
        <end position="205"/>
    </location>
</feature>
<feature type="topological domain" description="Lumenal" evidence="1">
    <location>
        <begin position="206"/>
        <end position="236"/>
    </location>
</feature>
<feature type="transmembrane region" description="Helical" evidence="1">
    <location>
        <begin position="237"/>
        <end position="257"/>
    </location>
</feature>
<feature type="topological domain" description="Cytoplasmic" evidence="1">
    <location>
        <begin position="258"/>
        <end position="261"/>
    </location>
</feature>
<feature type="transmembrane region" description="Helical" evidence="1">
    <location>
        <begin position="262"/>
        <end position="282"/>
    </location>
</feature>
<feature type="topological domain" description="Lumenal" evidence="1">
    <location>
        <begin position="283"/>
        <end position="328"/>
    </location>
</feature>
<feature type="transmembrane region" description="Helical" evidence="1">
    <location>
        <begin position="329"/>
        <end position="349"/>
    </location>
</feature>
<feature type="topological domain" description="Cytoplasmic" evidence="1">
    <location>
        <begin position="350"/>
        <end position="356"/>
    </location>
</feature>
<feature type="transmembrane region" description="Helical" evidence="1">
    <location>
        <begin position="357"/>
        <end position="377"/>
    </location>
</feature>
<feature type="topological domain" description="Lumenal" evidence="1">
    <location>
        <begin position="378"/>
        <end position="403"/>
    </location>
</feature>
<feature type="transmembrane region" description="Helical" evidence="1">
    <location>
        <begin position="404"/>
        <end position="424"/>
    </location>
</feature>
<feature type="topological domain" description="Cytoplasmic" evidence="1">
    <location>
        <begin position="425"/>
        <end position="435"/>
    </location>
</feature>
<feature type="transmembrane region" description="Helical" evidence="1">
    <location>
        <begin position="436"/>
        <end position="456"/>
    </location>
</feature>
<feature type="topological domain" description="Lumenal" evidence="1">
    <location>
        <begin position="457"/>
        <end position="517"/>
    </location>
</feature>
<feature type="transmembrane region" description="Helical" evidence="1">
    <location>
        <begin position="518"/>
        <end position="538"/>
    </location>
</feature>
<feature type="topological domain" description="Cytoplasmic" evidence="1">
    <location>
        <begin position="539"/>
        <end position="838"/>
    </location>
</feature>
<keyword id="KW-0256">Endoplasmic reticulum</keyword>
<keyword id="KW-0444">Lipid biosynthesis</keyword>
<keyword id="KW-0443">Lipid metabolism</keyword>
<keyword id="KW-0472">Membrane</keyword>
<keyword id="KW-0489">Methyltransferase</keyword>
<keyword id="KW-0594">Phospholipid biosynthesis</keyword>
<keyword id="KW-1208">Phospholipid metabolism</keyword>
<keyword id="KW-1185">Reference proteome</keyword>
<keyword id="KW-0949">S-adenosyl-L-methionine</keyword>
<keyword id="KW-0808">Transferase</keyword>
<keyword id="KW-0812">Transmembrane</keyword>
<keyword id="KW-1133">Transmembrane helix</keyword>